<keyword id="KW-0028">Amino-acid biosynthesis</keyword>
<keyword id="KW-0210">Decarboxylase</keyword>
<keyword id="KW-0456">Lyase</keyword>
<keyword id="KW-0457">Lysine biosynthesis</keyword>
<keyword id="KW-0663">Pyridoxal phosphate</keyword>
<keyword id="KW-1185">Reference proteome</keyword>
<protein>
    <recommendedName>
        <fullName evidence="1">Diaminopimelate decarboxylase</fullName>
        <shortName evidence="1">DAP decarboxylase</shortName>
        <shortName evidence="1">DAPDC</shortName>
        <ecNumber evidence="1">4.1.1.20</ecNumber>
    </recommendedName>
</protein>
<name>DCDA_BACTN</name>
<proteinExistence type="inferred from homology"/>
<dbReference type="EC" id="4.1.1.20" evidence="1"/>
<dbReference type="EMBL" id="AE015928">
    <property type="protein sequence ID" value="AAO76481.1"/>
    <property type="molecule type" value="Genomic_DNA"/>
</dbReference>
<dbReference type="RefSeq" id="NP_810287.1">
    <property type="nucleotide sequence ID" value="NC_004663.1"/>
</dbReference>
<dbReference type="RefSeq" id="WP_008762402.1">
    <property type="nucleotide sequence ID" value="NZ_UYXG01000037.1"/>
</dbReference>
<dbReference type="SMR" id="Q8A800"/>
<dbReference type="FunCoup" id="Q8A800">
    <property type="interactions" value="422"/>
</dbReference>
<dbReference type="STRING" id="226186.BT_1374"/>
<dbReference type="PaxDb" id="226186-BT_1374"/>
<dbReference type="EnsemblBacteria" id="AAO76481">
    <property type="protein sequence ID" value="AAO76481"/>
    <property type="gene ID" value="BT_1374"/>
</dbReference>
<dbReference type="GeneID" id="60927355"/>
<dbReference type="KEGG" id="bth:BT_1374"/>
<dbReference type="PATRIC" id="fig|226186.12.peg.1409"/>
<dbReference type="eggNOG" id="COG0019">
    <property type="taxonomic scope" value="Bacteria"/>
</dbReference>
<dbReference type="HOGENOM" id="CLU_026444_0_0_10"/>
<dbReference type="InParanoid" id="Q8A800"/>
<dbReference type="OrthoDB" id="9802241at2"/>
<dbReference type="UniPathway" id="UPA00034">
    <property type="reaction ID" value="UER00027"/>
</dbReference>
<dbReference type="Proteomes" id="UP000001414">
    <property type="component" value="Chromosome"/>
</dbReference>
<dbReference type="GO" id="GO:0008836">
    <property type="term" value="F:diaminopimelate decarboxylase activity"/>
    <property type="evidence" value="ECO:0000318"/>
    <property type="project" value="GO_Central"/>
</dbReference>
<dbReference type="GO" id="GO:0030170">
    <property type="term" value="F:pyridoxal phosphate binding"/>
    <property type="evidence" value="ECO:0007669"/>
    <property type="project" value="UniProtKB-UniRule"/>
</dbReference>
<dbReference type="GO" id="GO:0009089">
    <property type="term" value="P:lysine biosynthetic process via diaminopimelate"/>
    <property type="evidence" value="ECO:0000318"/>
    <property type="project" value="GO_Central"/>
</dbReference>
<dbReference type="CDD" id="cd06828">
    <property type="entry name" value="PLPDE_III_DapDC"/>
    <property type="match status" value="1"/>
</dbReference>
<dbReference type="FunFam" id="3.20.20.10:FF:000003">
    <property type="entry name" value="Diaminopimelate decarboxylase"/>
    <property type="match status" value="1"/>
</dbReference>
<dbReference type="Gene3D" id="3.20.20.10">
    <property type="entry name" value="Alanine racemase"/>
    <property type="match status" value="1"/>
</dbReference>
<dbReference type="Gene3D" id="2.40.37.10">
    <property type="entry name" value="Lyase, Ornithine Decarboxylase, Chain A, domain 1"/>
    <property type="match status" value="1"/>
</dbReference>
<dbReference type="HAMAP" id="MF_02120">
    <property type="entry name" value="LysA"/>
    <property type="match status" value="1"/>
</dbReference>
<dbReference type="InterPro" id="IPR009006">
    <property type="entry name" value="Ala_racemase/Decarboxylase_C"/>
</dbReference>
<dbReference type="InterPro" id="IPR002986">
    <property type="entry name" value="DAP_deCOOHase_LysA"/>
</dbReference>
<dbReference type="InterPro" id="IPR022643">
    <property type="entry name" value="De-COase2_C"/>
</dbReference>
<dbReference type="InterPro" id="IPR022644">
    <property type="entry name" value="De-COase2_N"/>
</dbReference>
<dbReference type="InterPro" id="IPR022653">
    <property type="entry name" value="De-COase2_pyr-phos_BS"/>
</dbReference>
<dbReference type="InterPro" id="IPR000183">
    <property type="entry name" value="Orn/DAP/Arg_de-COase"/>
</dbReference>
<dbReference type="InterPro" id="IPR029066">
    <property type="entry name" value="PLP-binding_barrel"/>
</dbReference>
<dbReference type="NCBIfam" id="TIGR01048">
    <property type="entry name" value="lysA"/>
    <property type="match status" value="1"/>
</dbReference>
<dbReference type="PANTHER" id="PTHR43727">
    <property type="entry name" value="DIAMINOPIMELATE DECARBOXYLASE"/>
    <property type="match status" value="1"/>
</dbReference>
<dbReference type="PANTHER" id="PTHR43727:SF2">
    <property type="entry name" value="GROUP IV DECARBOXYLASE"/>
    <property type="match status" value="1"/>
</dbReference>
<dbReference type="Pfam" id="PF02784">
    <property type="entry name" value="Orn_Arg_deC_N"/>
    <property type="match status" value="1"/>
</dbReference>
<dbReference type="Pfam" id="PF00278">
    <property type="entry name" value="Orn_DAP_Arg_deC"/>
    <property type="match status" value="1"/>
</dbReference>
<dbReference type="PRINTS" id="PR01181">
    <property type="entry name" value="DAPDCRBXLASE"/>
</dbReference>
<dbReference type="PRINTS" id="PR01179">
    <property type="entry name" value="ODADCRBXLASE"/>
</dbReference>
<dbReference type="SUPFAM" id="SSF50621">
    <property type="entry name" value="Alanine racemase C-terminal domain-like"/>
    <property type="match status" value="1"/>
</dbReference>
<dbReference type="SUPFAM" id="SSF51419">
    <property type="entry name" value="PLP-binding barrel"/>
    <property type="match status" value="1"/>
</dbReference>
<dbReference type="PROSITE" id="PS00878">
    <property type="entry name" value="ODR_DC_2_1"/>
    <property type="match status" value="1"/>
</dbReference>
<dbReference type="PROSITE" id="PS00879">
    <property type="entry name" value="ODR_DC_2_2"/>
    <property type="match status" value="1"/>
</dbReference>
<feature type="chain" id="PRO_0000411127" description="Diaminopimelate decarboxylase">
    <location>
        <begin position="1"/>
        <end position="386"/>
    </location>
</feature>
<feature type="binding site" evidence="1">
    <location>
        <position position="228"/>
    </location>
    <ligand>
        <name>pyridoxal 5'-phosphate</name>
        <dbReference type="ChEBI" id="CHEBI:597326"/>
    </ligand>
</feature>
<feature type="binding site" evidence="1">
    <location>
        <begin position="266"/>
        <end position="269"/>
    </location>
    <ligand>
        <name>pyridoxal 5'-phosphate</name>
        <dbReference type="ChEBI" id="CHEBI:597326"/>
    </ligand>
</feature>
<feature type="binding site" evidence="1">
    <location>
        <position position="269"/>
    </location>
    <ligand>
        <name>substrate</name>
    </ligand>
</feature>
<feature type="binding site" evidence="1">
    <location>
        <position position="305"/>
    </location>
    <ligand>
        <name>substrate</name>
    </ligand>
</feature>
<feature type="binding site" evidence="1">
    <location>
        <position position="309"/>
    </location>
    <ligand>
        <name>substrate</name>
    </ligand>
</feature>
<feature type="binding site" evidence="1">
    <location>
        <position position="335"/>
    </location>
    <ligand>
        <name>substrate</name>
    </ligand>
</feature>
<feature type="binding site" evidence="1">
    <location>
        <position position="363"/>
    </location>
    <ligand>
        <name>pyridoxal 5'-phosphate</name>
        <dbReference type="ChEBI" id="CHEBI:597326"/>
    </ligand>
</feature>
<feature type="binding site" evidence="1">
    <location>
        <position position="363"/>
    </location>
    <ligand>
        <name>substrate</name>
    </ligand>
</feature>
<feature type="modified residue" description="N6-(pyridoxal phosphate)lysine" evidence="1">
    <location>
        <position position="49"/>
    </location>
</feature>
<gene>
    <name evidence="1" type="primary">lysA</name>
    <name type="ordered locus">BT_1374</name>
</gene>
<accession>Q8A800</accession>
<reference key="1">
    <citation type="journal article" date="2003" name="Science">
        <title>A genomic view of the human-Bacteroides thetaiotaomicron symbiosis.</title>
        <authorList>
            <person name="Xu J."/>
            <person name="Bjursell M.K."/>
            <person name="Himrod J."/>
            <person name="Deng S."/>
            <person name="Carmichael L.K."/>
            <person name="Chiang H.C."/>
            <person name="Hooper L.V."/>
            <person name="Gordon J.I."/>
        </authorList>
    </citation>
    <scope>NUCLEOTIDE SEQUENCE [LARGE SCALE GENOMIC DNA]</scope>
    <source>
        <strain>ATCC 29148 / DSM 2079 / JCM 5827 / CCUG 10774 / NCTC 10582 / VPI-5482 / E50</strain>
    </source>
</reference>
<organism>
    <name type="scientific">Bacteroides thetaiotaomicron (strain ATCC 29148 / DSM 2079 / JCM 5827 / CCUG 10774 / NCTC 10582 / VPI-5482 / E50)</name>
    <dbReference type="NCBI Taxonomy" id="226186"/>
    <lineage>
        <taxon>Bacteria</taxon>
        <taxon>Pseudomonadati</taxon>
        <taxon>Bacteroidota</taxon>
        <taxon>Bacteroidia</taxon>
        <taxon>Bacteroidales</taxon>
        <taxon>Bacteroidaceae</taxon>
        <taxon>Bacteroides</taxon>
    </lineage>
</organism>
<comment type="function">
    <text evidence="1">Specifically catalyzes the decarboxylation of meso-diaminopimelate (meso-DAP) to L-lysine.</text>
</comment>
<comment type="catalytic activity">
    <reaction evidence="1">
        <text>meso-2,6-diaminopimelate + H(+) = L-lysine + CO2</text>
        <dbReference type="Rhea" id="RHEA:15101"/>
        <dbReference type="ChEBI" id="CHEBI:15378"/>
        <dbReference type="ChEBI" id="CHEBI:16526"/>
        <dbReference type="ChEBI" id="CHEBI:32551"/>
        <dbReference type="ChEBI" id="CHEBI:57791"/>
        <dbReference type="EC" id="4.1.1.20"/>
    </reaction>
</comment>
<comment type="cofactor">
    <cofactor evidence="1">
        <name>pyridoxal 5'-phosphate</name>
        <dbReference type="ChEBI" id="CHEBI:597326"/>
    </cofactor>
</comment>
<comment type="pathway">
    <text evidence="1">Amino-acid biosynthesis; L-lysine biosynthesis via DAP pathway; L-lysine from DL-2,6-diaminopimelate: step 1/1.</text>
</comment>
<comment type="subunit">
    <text evidence="1">Homodimer.</text>
</comment>
<comment type="similarity">
    <text evidence="1">Belongs to the Orn/Lys/Arg decarboxylase class-II family. LysA subfamily.</text>
</comment>
<evidence type="ECO:0000255" key="1">
    <source>
        <dbReference type="HAMAP-Rule" id="MF_02120"/>
    </source>
</evidence>
<sequence>MKGIFPIDKFRTLQTPFYYYDTKVLRDTLSAINQEVAKYPSYSVHYAVKANANPKVLTIIRESGMGADCVSGGEIRAAVRAGFPANKIVFAGVGKADWEINLGLEYGIFCFNVESIPELEVINELAAAQNKIANVAFRINPDVGAHTHANITTGLAENKFGISMQDMDRVIDVALEMKNVKFIGLHFHIGSQILDMGDFIALCNRVNELQDKLEARRILVEHINVGGGLGIDYGHPNRQSVPDFKSYFATYAGQLKLRPYQTLHFELGRAVVGQCGSLISKVLYVKQGTKKKFAILDAGMTDLIRPALYQAYHKMENITSEEPVEAYDVVGPICESSDVFGKAIDLNKVKRGDLIALRSAGAYGEIMASGYNCRELPKGYTSDELV</sequence>